<accession>Q7SZ22</accession>
<feature type="chain" id="PRO_0000267634" description="Small ubiquitin-related modifier 3">
    <location>
        <begin position="1"/>
        <end position="92"/>
    </location>
</feature>
<feature type="propeptide" id="PRO_0000267635" evidence="1">
    <location>
        <begin position="93"/>
        <end position="94"/>
    </location>
</feature>
<feature type="domain" description="Ubiquitin-like" evidence="2">
    <location>
        <begin position="15"/>
        <end position="92"/>
    </location>
</feature>
<feature type="cross-link" description="Glycyl lysine isopeptide (Lys-Gly) (interchain with G-Cter in SUMO)" evidence="1">
    <location>
        <position position="11"/>
    </location>
</feature>
<feature type="cross-link" description="Glycyl lysine isopeptide (Gly-Lys) (interchain with K-? in acceptor proteins)" evidence="2">
    <location>
        <position position="92"/>
    </location>
</feature>
<name>SUMO3_XENLA</name>
<keyword id="KW-0963">Cytoplasm</keyword>
<keyword id="KW-1017">Isopeptide bond</keyword>
<keyword id="KW-0539">Nucleus</keyword>
<keyword id="KW-1185">Reference proteome</keyword>
<keyword id="KW-0832">Ubl conjugation</keyword>
<keyword id="KW-0833">Ubl conjugation pathway</keyword>
<evidence type="ECO:0000250" key="1"/>
<evidence type="ECO:0000255" key="2">
    <source>
        <dbReference type="PROSITE-ProRule" id="PRU00214"/>
    </source>
</evidence>
<evidence type="ECO:0000305" key="3"/>
<reference key="1">
    <citation type="submission" date="2003-06" db="EMBL/GenBank/DDBJ databases">
        <authorList>
            <consortium name="NIH - Xenopus Gene Collection (XGC) project"/>
        </authorList>
    </citation>
    <scope>NUCLEOTIDE SEQUENCE [LARGE SCALE MRNA]</scope>
</reference>
<proteinExistence type="inferred from homology"/>
<gene>
    <name type="primary">sumo3</name>
</gene>
<dbReference type="EMBL" id="BC054172">
    <property type="protein sequence ID" value="AAH54172.1"/>
    <property type="molecule type" value="mRNA"/>
</dbReference>
<dbReference type="RefSeq" id="NP_001079759.1">
    <property type="nucleotide sequence ID" value="NM_001086290.1"/>
</dbReference>
<dbReference type="SMR" id="Q7SZ22"/>
<dbReference type="DNASU" id="379449"/>
<dbReference type="GeneID" id="379449"/>
<dbReference type="KEGG" id="xla:379449"/>
<dbReference type="CTD" id="379449"/>
<dbReference type="Xenbase" id="XB-GENE-1004218">
    <property type="gene designation" value="sumo3.L"/>
</dbReference>
<dbReference type="OrthoDB" id="442921at2759"/>
<dbReference type="CD-CODE" id="78E86D56">
    <property type="entry name" value="Mitochondrial cloud"/>
</dbReference>
<dbReference type="Proteomes" id="UP000186698">
    <property type="component" value="Chromosome 9_10L"/>
</dbReference>
<dbReference type="GO" id="GO:0005737">
    <property type="term" value="C:cytoplasm"/>
    <property type="evidence" value="ECO:0007669"/>
    <property type="project" value="UniProtKB-SubCell"/>
</dbReference>
<dbReference type="GO" id="GO:0005634">
    <property type="term" value="C:nucleus"/>
    <property type="evidence" value="ECO:0000318"/>
    <property type="project" value="GO_Central"/>
</dbReference>
<dbReference type="GO" id="GO:0016605">
    <property type="term" value="C:PML body"/>
    <property type="evidence" value="ECO:0007669"/>
    <property type="project" value="UniProtKB-SubCell"/>
</dbReference>
<dbReference type="GO" id="GO:0031386">
    <property type="term" value="F:protein tag activity"/>
    <property type="evidence" value="ECO:0000318"/>
    <property type="project" value="GO_Central"/>
</dbReference>
<dbReference type="GO" id="GO:0044389">
    <property type="term" value="F:ubiquitin-like protein ligase binding"/>
    <property type="evidence" value="ECO:0000318"/>
    <property type="project" value="GO_Central"/>
</dbReference>
<dbReference type="GO" id="GO:0016925">
    <property type="term" value="P:protein sumoylation"/>
    <property type="evidence" value="ECO:0000318"/>
    <property type="project" value="GO_Central"/>
</dbReference>
<dbReference type="CDD" id="cd16115">
    <property type="entry name" value="Ubl_SUMO2_3_4"/>
    <property type="match status" value="1"/>
</dbReference>
<dbReference type="FunFam" id="3.10.20.90:FF:000022">
    <property type="entry name" value="Small ubiquitin-related modifier"/>
    <property type="match status" value="1"/>
</dbReference>
<dbReference type="Gene3D" id="3.10.20.90">
    <property type="entry name" value="Phosphatidylinositol 3-kinase Catalytic Subunit, Chain A, domain 1"/>
    <property type="match status" value="1"/>
</dbReference>
<dbReference type="InterPro" id="IPR022617">
    <property type="entry name" value="Rad60/SUMO-like_dom"/>
</dbReference>
<dbReference type="InterPro" id="IPR000626">
    <property type="entry name" value="Ubiquitin-like_dom"/>
</dbReference>
<dbReference type="InterPro" id="IPR029071">
    <property type="entry name" value="Ubiquitin-like_domsf"/>
</dbReference>
<dbReference type="PANTHER" id="PTHR10562">
    <property type="entry name" value="SMALL UBIQUITIN-RELATED MODIFIER"/>
    <property type="match status" value="1"/>
</dbReference>
<dbReference type="Pfam" id="PF11976">
    <property type="entry name" value="Rad60-SLD"/>
    <property type="match status" value="1"/>
</dbReference>
<dbReference type="SMART" id="SM00213">
    <property type="entry name" value="UBQ"/>
    <property type="match status" value="1"/>
</dbReference>
<dbReference type="SUPFAM" id="SSF54236">
    <property type="entry name" value="Ubiquitin-like"/>
    <property type="match status" value="1"/>
</dbReference>
<dbReference type="PROSITE" id="PS50053">
    <property type="entry name" value="UBIQUITIN_2"/>
    <property type="match status" value="1"/>
</dbReference>
<comment type="function">
    <text evidence="1">Ubiquitin-like protein which can be covalently attached to target lysines either as a monomer or as a lysine-linked polymer. Does not seem to be involved in protein degradation and may function as an antagonist of ubiquitin in the degradation process. Plays a role in a number of cellular processes such as nuclear transport, DNA replication and repair, mitosis and signal transduction. Covalent attachment to its substrates requires prior activation by the E1 complex sae1-sae2 and linkage to the E2 enzyme ube2i (By similarity).</text>
</comment>
<comment type="subunit">
    <text evidence="1">Interacts with sae2 and ube2i. Covalently attached to a number of proteins (By similarity).</text>
</comment>
<comment type="subcellular location">
    <subcellularLocation>
        <location evidence="1">Cytoplasm</location>
    </subcellularLocation>
    <subcellularLocation>
        <location evidence="1">Nucleus</location>
        <location evidence="1">PML body</location>
    </subcellularLocation>
</comment>
<comment type="PTM">
    <text evidence="1">Polymeric chains can be formed through Lys-11 cross-linking.</text>
</comment>
<comment type="PTM">
    <text evidence="1">Cleavage of precursor form by a sentrin-specific protease is necessary for function.</text>
</comment>
<comment type="similarity">
    <text evidence="3">Belongs to the ubiquitin family. SUMO subfamily.</text>
</comment>
<organism>
    <name type="scientific">Xenopus laevis</name>
    <name type="common">African clawed frog</name>
    <dbReference type="NCBI Taxonomy" id="8355"/>
    <lineage>
        <taxon>Eukaryota</taxon>
        <taxon>Metazoa</taxon>
        <taxon>Chordata</taxon>
        <taxon>Craniata</taxon>
        <taxon>Vertebrata</taxon>
        <taxon>Euteleostomi</taxon>
        <taxon>Amphibia</taxon>
        <taxon>Batrachia</taxon>
        <taxon>Anura</taxon>
        <taxon>Pipoidea</taxon>
        <taxon>Pipidae</taxon>
        <taxon>Xenopodinae</taxon>
        <taxon>Xenopus</taxon>
        <taxon>Xenopus</taxon>
    </lineage>
</organism>
<sequence length="94" mass="10713">MSEEKPKEGVKTENDHINLKVAGQDGSVVQFKIKRHTPLSKLMKAYCDRQGLSMRQIRFRFDGQPINETDTPAQLEMEDEDTIDVFQQQTGGVC</sequence>
<protein>
    <recommendedName>
        <fullName>Small ubiquitin-related modifier 3</fullName>
        <shortName>SUMO-3</shortName>
    </recommendedName>
</protein>